<protein>
    <recommendedName>
        <fullName>Alanine- and arginine-rich domain-containing protein</fullName>
    </recommendedName>
</protein>
<feature type="chain" id="PRO_0000337036" description="Alanine- and arginine-rich domain-containing protein">
    <location>
        <begin position="1"/>
        <end position="155"/>
    </location>
</feature>
<feature type="sequence variant" id="VAR_043570" description="In dbSNP:rs16889283." evidence="1">
    <original>G</original>
    <variation>R</variation>
    <location>
        <position position="96"/>
    </location>
</feature>
<dbReference type="EMBL" id="AB181519">
    <property type="protein sequence ID" value="BAE03184.1"/>
    <property type="molecule type" value="mRNA"/>
</dbReference>
<dbReference type="EMBL" id="BC142621">
    <property type="protein sequence ID" value="AAI42622.1"/>
    <property type="molecule type" value="mRNA"/>
</dbReference>
<dbReference type="CCDS" id="CCDS34935.1"/>
<dbReference type="RefSeq" id="NP_001020528.1">
    <property type="nucleotide sequence ID" value="NM_001025357.3"/>
</dbReference>
<dbReference type="SMR" id="Q4LEZ3"/>
<dbReference type="BioGRID" id="137412">
    <property type="interactions" value="15"/>
</dbReference>
<dbReference type="FunCoup" id="Q4LEZ3">
    <property type="interactions" value="1"/>
</dbReference>
<dbReference type="IntAct" id="Q4LEZ3">
    <property type="interactions" value="15"/>
</dbReference>
<dbReference type="STRING" id="9606.ENSP00000367528"/>
<dbReference type="GlyGen" id="Q4LEZ3">
    <property type="glycosylation" value="1 site, 1 O-linked glycan (1 site)"/>
</dbReference>
<dbReference type="BioMuta" id="AARD"/>
<dbReference type="DMDM" id="121944377"/>
<dbReference type="jPOST" id="Q4LEZ3"/>
<dbReference type="MassIVE" id="Q4LEZ3"/>
<dbReference type="PaxDb" id="9606-ENSP00000367528"/>
<dbReference type="PeptideAtlas" id="Q4LEZ3"/>
<dbReference type="ProteomicsDB" id="62246"/>
<dbReference type="Antibodypedia" id="74104">
    <property type="antibodies" value="1 antibodies from 1 providers"/>
</dbReference>
<dbReference type="DNASU" id="441376"/>
<dbReference type="Ensembl" id="ENST00000378279.4">
    <property type="protein sequence ID" value="ENSP00000367528.3"/>
    <property type="gene ID" value="ENSG00000205002.4"/>
</dbReference>
<dbReference type="GeneID" id="441376"/>
<dbReference type="KEGG" id="hsa:441376"/>
<dbReference type="MANE-Select" id="ENST00000378279.4">
    <property type="protein sequence ID" value="ENSP00000367528.3"/>
    <property type="RefSeq nucleotide sequence ID" value="NM_001025357.3"/>
    <property type="RefSeq protein sequence ID" value="NP_001020528.1"/>
</dbReference>
<dbReference type="UCSC" id="uc003yof.4">
    <property type="organism name" value="human"/>
</dbReference>
<dbReference type="AGR" id="HGNC:33842"/>
<dbReference type="CTD" id="441376"/>
<dbReference type="DisGeNET" id="441376"/>
<dbReference type="GeneCards" id="AARD"/>
<dbReference type="HGNC" id="HGNC:33842">
    <property type="gene designation" value="AARD"/>
</dbReference>
<dbReference type="HPA" id="ENSG00000205002">
    <property type="expression patterns" value="Tissue enhanced (testis, urinary bladder)"/>
</dbReference>
<dbReference type="MIM" id="621042">
    <property type="type" value="gene"/>
</dbReference>
<dbReference type="neXtProt" id="NX_Q4LEZ3"/>
<dbReference type="OpenTargets" id="ENSG00000205002"/>
<dbReference type="PharmGKB" id="PA164717502"/>
<dbReference type="VEuPathDB" id="HostDB:ENSG00000205002"/>
<dbReference type="eggNOG" id="ENOG502SG9F">
    <property type="taxonomic scope" value="Eukaryota"/>
</dbReference>
<dbReference type="GeneTree" id="ENSGT00390000007815"/>
<dbReference type="HOGENOM" id="CLU_142929_0_0_1"/>
<dbReference type="InParanoid" id="Q4LEZ3"/>
<dbReference type="OMA" id="ELEMAWE"/>
<dbReference type="OrthoDB" id="9948935at2759"/>
<dbReference type="PAN-GO" id="Q4LEZ3">
    <property type="GO annotations" value="0 GO annotations based on evolutionary models"/>
</dbReference>
<dbReference type="PhylomeDB" id="Q4LEZ3"/>
<dbReference type="TreeFam" id="TF339066"/>
<dbReference type="PathwayCommons" id="Q4LEZ3"/>
<dbReference type="SignaLink" id="Q4LEZ3"/>
<dbReference type="BioGRID-ORCS" id="441376">
    <property type="hits" value="14 hits in 1137 CRISPR screens"/>
</dbReference>
<dbReference type="GenomeRNAi" id="441376"/>
<dbReference type="Pharos" id="Q4LEZ3">
    <property type="development level" value="Tdark"/>
</dbReference>
<dbReference type="PRO" id="PR:Q4LEZ3"/>
<dbReference type="Proteomes" id="UP000005640">
    <property type="component" value="Chromosome 8"/>
</dbReference>
<dbReference type="RNAct" id="Q4LEZ3">
    <property type="molecule type" value="protein"/>
</dbReference>
<dbReference type="Bgee" id="ENSG00000205002">
    <property type="expression patterns" value="Expressed in left testis and 90 other cell types or tissues"/>
</dbReference>
<dbReference type="GO" id="GO:0033574">
    <property type="term" value="P:response to testosterone"/>
    <property type="evidence" value="ECO:0007669"/>
    <property type="project" value="Ensembl"/>
</dbReference>
<dbReference type="InterPro" id="IPR051771">
    <property type="entry name" value="FAM167_domain"/>
</dbReference>
<dbReference type="PANTHER" id="PTHR32289:SF2">
    <property type="entry name" value="ALANINE AND ARGININE-RICH DOMAIN-CONTAINING PROTEIN"/>
    <property type="match status" value="1"/>
</dbReference>
<dbReference type="PANTHER" id="PTHR32289">
    <property type="entry name" value="PROTEIN FAM167A"/>
    <property type="match status" value="1"/>
</dbReference>
<organism>
    <name type="scientific">Homo sapiens</name>
    <name type="common">Human</name>
    <dbReference type="NCBI Taxonomy" id="9606"/>
    <lineage>
        <taxon>Eukaryota</taxon>
        <taxon>Metazoa</taxon>
        <taxon>Chordata</taxon>
        <taxon>Craniata</taxon>
        <taxon>Vertebrata</taxon>
        <taxon>Euteleostomi</taxon>
        <taxon>Mammalia</taxon>
        <taxon>Eutheria</taxon>
        <taxon>Euarchontoglires</taxon>
        <taxon>Primates</taxon>
        <taxon>Haplorrhini</taxon>
        <taxon>Catarrhini</taxon>
        <taxon>Hominidae</taxon>
        <taxon>Homo</taxon>
    </lineage>
</organism>
<proteinExistence type="evidence at protein level"/>
<comment type="interaction">
    <interactant intactId="EBI-5463075">
        <id>Q4LEZ3</id>
    </interactant>
    <interactant intactId="EBI-2350265">
        <id>Q7L2Z9</id>
        <label>CENPQ</label>
    </interactant>
    <organismsDiffer>false</organismsDiffer>
    <experiments>3</experiments>
</comment>
<comment type="interaction">
    <interactant intactId="EBI-5463075">
        <id>Q4LEZ3</id>
    </interactant>
    <interactant intactId="EBI-11752486">
        <id>Q86XR8-3</id>
        <label>CEP57</label>
    </interactant>
    <organismsDiffer>false</organismsDiffer>
    <experiments>3</experiments>
</comment>
<comment type="interaction">
    <interactant intactId="EBI-5463075">
        <id>Q4LEZ3</id>
    </interactant>
    <interactant intactId="EBI-717919">
        <id>Q4V328</id>
        <label>GRIPAP1</label>
    </interactant>
    <organismsDiffer>false</organismsDiffer>
    <experiments>3</experiments>
</comment>
<comment type="interaction">
    <interactant intactId="EBI-5463075">
        <id>Q4LEZ3</id>
    </interactant>
    <interactant intactId="EBI-2805604">
        <id>Q2KHM9</id>
        <label>KIAA0753</label>
    </interactant>
    <organismsDiffer>false</organismsDiffer>
    <experiments>3</experiments>
</comment>
<comment type="interaction">
    <interactant intactId="EBI-5463075">
        <id>Q4LEZ3</id>
    </interactant>
    <interactant intactId="EBI-2952736">
        <id>Q2M2I5</id>
        <label>KRT24</label>
    </interactant>
    <organismsDiffer>false</organismsDiffer>
    <experiments>3</experiments>
</comment>
<comment type="interaction">
    <interactant intactId="EBI-5463075">
        <id>Q4LEZ3</id>
    </interactant>
    <interactant intactId="EBI-3044087">
        <id>Q7Z3Y8</id>
        <label>KRT27</label>
    </interactant>
    <organismsDiffer>false</organismsDiffer>
    <experiments>6</experiments>
</comment>
<comment type="interaction">
    <interactant intactId="EBI-5463075">
        <id>Q4LEZ3</id>
    </interactant>
    <interactant intactId="EBI-2798728">
        <id>P61968</id>
        <label>LMO4</label>
    </interactant>
    <organismsDiffer>false</organismsDiffer>
    <experiments>3</experiments>
</comment>
<comment type="interaction">
    <interactant intactId="EBI-5463075">
        <id>Q4LEZ3</id>
    </interactant>
    <interactant intactId="EBI-751857">
        <id>O15481</id>
        <label>MAGEB4</label>
    </interactant>
    <organismsDiffer>false</organismsDiffer>
    <experiments>3</experiments>
</comment>
<comment type="interaction">
    <interactant intactId="EBI-5463075">
        <id>Q4LEZ3</id>
    </interactant>
    <interactant intactId="EBI-741158">
        <id>Q96HA8</id>
        <label>NTAQ1</label>
    </interactant>
    <organismsDiffer>false</organismsDiffer>
    <experiments>3</experiments>
</comment>
<comment type="interaction">
    <interactant intactId="EBI-5463075">
        <id>Q4LEZ3</id>
    </interactant>
    <interactant intactId="EBI-712466">
        <id>Q16623</id>
        <label>STX1A</label>
    </interactant>
    <organismsDiffer>false</organismsDiffer>
    <experiments>3</experiments>
</comment>
<comment type="interaction">
    <interactant intactId="EBI-5463075">
        <id>Q4LEZ3</id>
    </interactant>
    <interactant intactId="EBI-11956649">
        <id>P32856-2</id>
        <label>STX2</label>
    </interactant>
    <organismsDiffer>false</organismsDiffer>
    <experiments>3</experiments>
</comment>
<comment type="interaction">
    <interactant intactId="EBI-5463075">
        <id>Q4LEZ3</id>
    </interactant>
    <interactant intactId="EBI-714206">
        <id>Q13190</id>
        <label>STX5</label>
    </interactant>
    <organismsDiffer>false</organismsDiffer>
    <experiments>3</experiments>
</comment>
<comment type="interaction">
    <interactant intactId="EBI-5463075">
        <id>Q4LEZ3</id>
    </interactant>
    <interactant intactId="EBI-1105213">
        <id>Q9UBB9</id>
        <label>TFIP11</label>
    </interactant>
    <organismsDiffer>false</organismsDiffer>
    <experiments>3</experiments>
</comment>
<comment type="interaction">
    <interactant intactId="EBI-5463075">
        <id>Q4LEZ3</id>
    </interactant>
    <interactant intactId="EBI-744794">
        <id>Q9BZW7</id>
        <label>TSGA10</label>
    </interactant>
    <organismsDiffer>false</organismsDiffer>
    <experiments>3</experiments>
</comment>
<comment type="interaction">
    <interactant intactId="EBI-5463075">
        <id>Q4LEZ3</id>
    </interactant>
    <interactant intactId="EBI-2559305">
        <id>A5D8V6</id>
        <label>VPS37C</label>
    </interactant>
    <organismsDiffer>false</organismsDiffer>
    <experiments>3</experiments>
</comment>
<name>AARD_HUMAN</name>
<gene>
    <name type="primary">AARD</name>
    <name type="synonym">C8orf85</name>
</gene>
<keyword id="KW-1267">Proteomics identification</keyword>
<keyword id="KW-1185">Reference proteome</keyword>
<sequence length="155" mass="17575">MGPGDFRRCRERISQGLQGLPGRAELWFPPRPACDFFGDGRSTDIQEEALAASPLLEDLRRRLTRAFQWAVQRAISRRVQEAAAAAAAREEQSWTGVEATLARLRAELVEMHFQNHQLARTLLDLNMKVQQLKKEYELEITSDSQSPKDDAANPE</sequence>
<reference key="1">
    <citation type="submission" date="2004-06" db="EMBL/GenBank/DDBJ databases">
        <title>Novel gene containing alanine and arginine rich domain on human chromosome 8.</title>
        <authorList>
            <person name="Ishikawa S.K."/>
            <person name="Shimizu A."/>
            <person name="Yamazaki S."/>
            <person name="Asakawa S."/>
            <person name="Shimizu N."/>
        </authorList>
    </citation>
    <scope>NUCLEOTIDE SEQUENCE [MRNA]</scope>
</reference>
<reference key="2">
    <citation type="journal article" date="2004" name="Genome Res.">
        <title>The status, quality, and expansion of the NIH full-length cDNA project: the Mammalian Gene Collection (MGC).</title>
        <authorList>
            <consortium name="The MGC Project Team"/>
        </authorList>
    </citation>
    <scope>NUCLEOTIDE SEQUENCE [LARGE SCALE MRNA]</scope>
    <scope>VARIANT ARG-96</scope>
</reference>
<accession>Q4LEZ3</accession>
<accession>A5PKU8</accession>
<evidence type="ECO:0000269" key="1">
    <source>
    </source>
</evidence>